<dbReference type="EMBL" id="L40578">
    <property type="status" value="NOT_ANNOTATED_CDS"/>
    <property type="molecule type" value="Genomic_DNA"/>
</dbReference>
<dbReference type="EMBL" id="M22826">
    <property type="status" value="NOT_ANNOTATED_CDS"/>
    <property type="molecule type" value="Genomic_DNA"/>
</dbReference>
<dbReference type="EMBL" id="X15901">
    <property type="protein sequence ID" value="CAA33927.1"/>
    <property type="molecule type" value="Genomic_DNA"/>
</dbReference>
<dbReference type="EMBL" id="AY522330">
    <property type="status" value="NOT_ANNOTATED_CDS"/>
    <property type="molecule type" value="Genomic_DNA"/>
</dbReference>
<dbReference type="PIR" id="JQ0267">
    <property type="entry name" value="R3RZ19"/>
</dbReference>
<dbReference type="SMR" id="P12153"/>
<dbReference type="FunCoup" id="P12153">
    <property type="interactions" value="27"/>
</dbReference>
<dbReference type="STRING" id="39947.P12153"/>
<dbReference type="PaxDb" id="39947-P12153"/>
<dbReference type="KEGG" id="osa:3131441"/>
<dbReference type="InParanoid" id="P12153"/>
<dbReference type="OrthoDB" id="584535at2759"/>
<dbReference type="Proteomes" id="UP000059680">
    <property type="component" value="Chloroplast"/>
</dbReference>
<dbReference type="GO" id="GO:0009507">
    <property type="term" value="C:chloroplast"/>
    <property type="evidence" value="ECO:0007669"/>
    <property type="project" value="UniProtKB-SubCell"/>
</dbReference>
<dbReference type="GO" id="GO:0005763">
    <property type="term" value="C:mitochondrial small ribosomal subunit"/>
    <property type="evidence" value="ECO:0000318"/>
    <property type="project" value="GO_Central"/>
</dbReference>
<dbReference type="GO" id="GO:0009536">
    <property type="term" value="C:plastid"/>
    <property type="evidence" value="ECO:0000250"/>
    <property type="project" value="Gramene"/>
</dbReference>
<dbReference type="GO" id="GO:0019843">
    <property type="term" value="F:rRNA binding"/>
    <property type="evidence" value="ECO:0007669"/>
    <property type="project" value="UniProtKB-UniRule"/>
</dbReference>
<dbReference type="GO" id="GO:0003735">
    <property type="term" value="F:structural constituent of ribosome"/>
    <property type="evidence" value="ECO:0000318"/>
    <property type="project" value="GO_Central"/>
</dbReference>
<dbReference type="GO" id="GO:0000028">
    <property type="term" value="P:ribosomal small subunit assembly"/>
    <property type="evidence" value="ECO:0000318"/>
    <property type="project" value="GO_Central"/>
</dbReference>
<dbReference type="GO" id="GO:0006412">
    <property type="term" value="P:translation"/>
    <property type="evidence" value="ECO:0007669"/>
    <property type="project" value="UniProtKB-UniRule"/>
</dbReference>
<dbReference type="FunFam" id="3.30.860.10:FF:000001">
    <property type="entry name" value="30S ribosomal protein S19"/>
    <property type="match status" value="1"/>
</dbReference>
<dbReference type="Gene3D" id="3.30.860.10">
    <property type="entry name" value="30s Ribosomal Protein S19, Chain A"/>
    <property type="match status" value="1"/>
</dbReference>
<dbReference type="HAMAP" id="MF_00531">
    <property type="entry name" value="Ribosomal_uS19"/>
    <property type="match status" value="1"/>
</dbReference>
<dbReference type="InterPro" id="IPR002222">
    <property type="entry name" value="Ribosomal_uS19"/>
</dbReference>
<dbReference type="InterPro" id="IPR005732">
    <property type="entry name" value="Ribosomal_uS19_bac-type"/>
</dbReference>
<dbReference type="InterPro" id="IPR020934">
    <property type="entry name" value="Ribosomal_uS19_CS"/>
</dbReference>
<dbReference type="InterPro" id="IPR023575">
    <property type="entry name" value="Ribosomal_uS19_SF"/>
</dbReference>
<dbReference type="NCBIfam" id="TIGR01050">
    <property type="entry name" value="rpsS_bact"/>
    <property type="match status" value="1"/>
</dbReference>
<dbReference type="PANTHER" id="PTHR11880">
    <property type="entry name" value="RIBOSOMAL PROTEIN S19P FAMILY MEMBER"/>
    <property type="match status" value="1"/>
</dbReference>
<dbReference type="PANTHER" id="PTHR11880:SF8">
    <property type="entry name" value="SMALL RIBOSOMAL SUBUNIT PROTEIN US19M"/>
    <property type="match status" value="1"/>
</dbReference>
<dbReference type="Pfam" id="PF00203">
    <property type="entry name" value="Ribosomal_S19"/>
    <property type="match status" value="1"/>
</dbReference>
<dbReference type="PIRSF" id="PIRSF002144">
    <property type="entry name" value="Ribosomal_S19"/>
    <property type="match status" value="1"/>
</dbReference>
<dbReference type="PRINTS" id="PR00975">
    <property type="entry name" value="RIBOSOMALS19"/>
</dbReference>
<dbReference type="SUPFAM" id="SSF54570">
    <property type="entry name" value="Ribosomal protein S19"/>
    <property type="match status" value="1"/>
</dbReference>
<dbReference type="PROSITE" id="PS00323">
    <property type="entry name" value="RIBOSOMAL_S19"/>
    <property type="match status" value="1"/>
</dbReference>
<organism>
    <name type="scientific">Oryza sativa subsp. japonica</name>
    <name type="common">Rice</name>
    <dbReference type="NCBI Taxonomy" id="39947"/>
    <lineage>
        <taxon>Eukaryota</taxon>
        <taxon>Viridiplantae</taxon>
        <taxon>Streptophyta</taxon>
        <taxon>Embryophyta</taxon>
        <taxon>Tracheophyta</taxon>
        <taxon>Spermatophyta</taxon>
        <taxon>Magnoliopsida</taxon>
        <taxon>Liliopsida</taxon>
        <taxon>Poales</taxon>
        <taxon>Poaceae</taxon>
        <taxon>BOP clade</taxon>
        <taxon>Oryzoideae</taxon>
        <taxon>Oryzeae</taxon>
        <taxon>Oryzinae</taxon>
        <taxon>Oryza</taxon>
        <taxon>Oryza sativa</taxon>
    </lineage>
</organism>
<protein>
    <recommendedName>
        <fullName evidence="2">Small ribosomal subunit protein uS19c</fullName>
    </recommendedName>
    <alternativeName>
        <fullName>30S ribosomal protein S19, chloroplastic</fullName>
    </alternativeName>
</protein>
<geneLocation type="chloroplast"/>
<reference key="1">
    <citation type="journal article" date="1991" name="Nucleic Acids Res.">
        <title>Fine structural features of the chloroplast genome: comparison of the sequenced chloroplast genomes.</title>
        <authorList>
            <person name="Shimada H."/>
            <person name="Sugiura M."/>
        </authorList>
    </citation>
    <scope>NUCLEOTIDE SEQUENCE [GENOMIC DNA]</scope>
    <source>
        <strain>cv. Nipponbare</strain>
    </source>
</reference>
<reference key="2">
    <citation type="journal article" date="1993" name="Curr. Genet.">
        <title>A chloroplast DNA mutational hotspot and gene conversion in a noncoding region near rbcL in the grass family (Poaceae).</title>
        <authorList>
            <person name="Morton B.R."/>
            <person name="Clegg M.T."/>
        </authorList>
    </citation>
    <scope>NUCLEOTIDE SEQUENCE [GENOMIC DNA]</scope>
    <source>
        <strain>cv. Nipponbare</strain>
    </source>
</reference>
<reference key="3">
    <citation type="journal article" date="1988" name="Gene">
        <title>Organization and nucleotide sequence of genes at both junctions between the two inverted repeats and the large single-copy region in the rice chloroplast genome.</title>
        <authorList>
            <person name="Moon E."/>
            <person name="Wu R."/>
        </authorList>
    </citation>
    <scope>NUCLEOTIDE SEQUENCE [GENOMIC DNA]</scope>
    <source>
        <strain>cv. Labelle</strain>
        <tissue>Seedling</tissue>
    </source>
</reference>
<reference key="4">
    <citation type="journal article" date="1989" name="Mol. Gen. Genet.">
        <title>The complete sequence of the rice (Oryza sativa) chloroplast genome: intermolecular recombination between distinct tRNA genes accounts for a major plastid DNA inversion during the evolution of the cereals.</title>
        <authorList>
            <person name="Hiratsuka J."/>
            <person name="Shimada H."/>
            <person name="Whittier R."/>
            <person name="Ishibashi T."/>
            <person name="Sakamoto M."/>
            <person name="Mori M."/>
            <person name="Kondo C."/>
            <person name="Honji Y."/>
            <person name="Sun C.-R."/>
            <person name="Meng B.-Y."/>
            <person name="Li Y.-Q."/>
            <person name="Kanno A."/>
            <person name="Nishizawa Y."/>
            <person name="Hirai A."/>
            <person name="Shinozaki K."/>
            <person name="Sugiura M."/>
        </authorList>
    </citation>
    <scope>NUCLEOTIDE SEQUENCE [LARGE SCALE GENOMIC DNA]</scope>
    <source>
        <strain>cv. Nipponbare</strain>
    </source>
</reference>
<reference key="5">
    <citation type="journal article" date="2004" name="Plant Physiol.">
        <title>A comparison of rice chloroplast genomes.</title>
        <authorList>
            <person name="Tang J."/>
            <person name="Xia H."/>
            <person name="Cao M."/>
            <person name="Zhang X."/>
            <person name="Zeng W."/>
            <person name="Hu S."/>
            <person name="Tong W."/>
            <person name="Wang J."/>
            <person name="Wang J."/>
            <person name="Yu J."/>
            <person name="Yang H."/>
            <person name="Zhu L."/>
        </authorList>
    </citation>
    <scope>NUCLEOTIDE SEQUENCE [LARGE SCALE GENOMIC DNA]</scope>
    <source>
        <strain>cv. Nipponbare</strain>
    </source>
</reference>
<evidence type="ECO:0000250" key="1"/>
<evidence type="ECO:0000305" key="2"/>
<gene>
    <name type="primary">rps19-A</name>
    <name type="ORF">Nip222</name>
</gene>
<gene>
    <name type="primary">rps19-B</name>
</gene>
<comment type="function">
    <text evidence="1">Protein S19 forms a complex with S13 that binds strongly to the 16S ribosomal RNA.</text>
</comment>
<comment type="subcellular location">
    <subcellularLocation>
        <location>Plastid</location>
        <location>Chloroplast</location>
    </subcellularLocation>
</comment>
<comment type="similarity">
    <text evidence="2">Belongs to the universal ribosomal protein uS19 family.</text>
</comment>
<keyword id="KW-0150">Chloroplast</keyword>
<keyword id="KW-0934">Plastid</keyword>
<keyword id="KW-1185">Reference proteome</keyword>
<keyword id="KW-0687">Ribonucleoprotein</keyword>
<keyword id="KW-0689">Ribosomal protein</keyword>
<keyword id="KW-0694">RNA-binding</keyword>
<keyword id="KW-0699">rRNA-binding</keyword>
<sequence>MTRKKTNPFVAHHLLAKIEKVNMKEEKETIVTWSRASSILPAMVGHTIAIHNGKEHIPIYITNPMVGRKLGEFVPTRHFTSYESARKDTKSRR</sequence>
<accession>P12153</accession>
<proteinExistence type="inferred from homology"/>
<name>RR19_ORYSJ</name>
<feature type="initiator methionine" description="Removed" evidence="1">
    <location>
        <position position="1"/>
    </location>
</feature>
<feature type="chain" id="PRO_0000129977" description="Small ribosomal subunit protein uS19c">
    <location>
        <begin position="2"/>
        <end position="93"/>
    </location>
</feature>
<feature type="sequence conflict" description="In Ref. 3; L40578/M22826." evidence="2" ref="3">
    <original>E</original>
    <variation>R</variation>
    <location>
        <position position="25"/>
    </location>
</feature>
<feature type="sequence conflict" description="In Ref. 3; L40578/M22826." evidence="2" ref="3">
    <original>L</original>
    <variation>H</variation>
    <location>
        <position position="40"/>
    </location>
</feature>